<protein>
    <recommendedName>
        <fullName>Putative F-box/LRR-repeat protein At4g00320</fullName>
    </recommendedName>
</protein>
<dbReference type="EMBL" id="AF013293">
    <property type="protein sequence ID" value="AAB62837.1"/>
    <property type="status" value="ALT_SEQ"/>
    <property type="molecule type" value="Genomic_DNA"/>
</dbReference>
<dbReference type="EMBL" id="AF195115">
    <property type="protein sequence ID" value="AAF02795.1"/>
    <property type="status" value="ALT_SEQ"/>
    <property type="molecule type" value="Genomic_DNA"/>
</dbReference>
<dbReference type="EMBL" id="AL161471">
    <property type="protein sequence ID" value="CAB80790.1"/>
    <property type="status" value="ALT_SEQ"/>
    <property type="molecule type" value="Genomic_DNA"/>
</dbReference>
<dbReference type="EMBL" id="CP002687">
    <property type="protein sequence ID" value="AEE81857.1"/>
    <property type="molecule type" value="Genomic_DNA"/>
</dbReference>
<dbReference type="PIR" id="T01539">
    <property type="entry name" value="T01539"/>
</dbReference>
<dbReference type="RefSeq" id="NP_567169.2">
    <property type="nucleotide sequence ID" value="NM_116254.2"/>
</dbReference>
<dbReference type="iPTMnet" id="P0C2G6"/>
<dbReference type="PaxDb" id="3702-AT4G00320.1"/>
<dbReference type="EnsemblPlants" id="AT4G00320.1">
    <property type="protein sequence ID" value="AT4G00320.1"/>
    <property type="gene ID" value="AT4G00320"/>
</dbReference>
<dbReference type="GeneID" id="827939"/>
<dbReference type="Gramene" id="AT4G00320.1">
    <property type="protein sequence ID" value="AT4G00320.1"/>
    <property type="gene ID" value="AT4G00320"/>
</dbReference>
<dbReference type="KEGG" id="ath:AT4G00320"/>
<dbReference type="Araport" id="AT4G00320"/>
<dbReference type="TAIR" id="AT4G00320"/>
<dbReference type="HOGENOM" id="CLU_010721_7_4_1"/>
<dbReference type="InParanoid" id="P0C2G6"/>
<dbReference type="OMA" id="IPEAICY"/>
<dbReference type="PhylomeDB" id="P0C2G6"/>
<dbReference type="PRO" id="PR:P0C2G6"/>
<dbReference type="Proteomes" id="UP000006548">
    <property type="component" value="Chromosome 4"/>
</dbReference>
<dbReference type="ExpressionAtlas" id="P0C2G6">
    <property type="expression patterns" value="baseline and differential"/>
</dbReference>
<dbReference type="CDD" id="cd22160">
    <property type="entry name" value="F-box_AtFBL13-like"/>
    <property type="match status" value="1"/>
</dbReference>
<dbReference type="Gene3D" id="3.80.10.10">
    <property type="entry name" value="Ribonuclease Inhibitor"/>
    <property type="match status" value="1"/>
</dbReference>
<dbReference type="InterPro" id="IPR036047">
    <property type="entry name" value="F-box-like_dom_sf"/>
</dbReference>
<dbReference type="InterPro" id="IPR053781">
    <property type="entry name" value="F-box_AtFBL13-like"/>
</dbReference>
<dbReference type="InterPro" id="IPR006566">
    <property type="entry name" value="FBD"/>
</dbReference>
<dbReference type="InterPro" id="IPR055294">
    <property type="entry name" value="FBL60-like"/>
</dbReference>
<dbReference type="InterPro" id="IPR032675">
    <property type="entry name" value="LRR_dom_sf"/>
</dbReference>
<dbReference type="InterPro" id="IPR055411">
    <property type="entry name" value="LRR_FXL15/At3g58940/PEG3-like"/>
</dbReference>
<dbReference type="PANTHER" id="PTHR31293">
    <property type="entry name" value="RNI-LIKE SUPERFAMILY PROTEIN"/>
    <property type="match status" value="1"/>
</dbReference>
<dbReference type="PANTHER" id="PTHR31293:SF16">
    <property type="entry name" value="RNI-LIKE SUPERFAMILY PROTEIN"/>
    <property type="match status" value="1"/>
</dbReference>
<dbReference type="Pfam" id="PF24758">
    <property type="entry name" value="LRR_At5g56370"/>
    <property type="match status" value="1"/>
</dbReference>
<dbReference type="SMART" id="SM00579">
    <property type="entry name" value="FBD"/>
    <property type="match status" value="1"/>
</dbReference>
<dbReference type="SUPFAM" id="SSF81383">
    <property type="entry name" value="F-box domain"/>
    <property type="match status" value="1"/>
</dbReference>
<dbReference type="SUPFAM" id="SSF52047">
    <property type="entry name" value="RNI-like"/>
    <property type="match status" value="1"/>
</dbReference>
<accession>P0C2G6</accession>
<accession>O23070</accession>
<sequence>MGSKKKCFDGSRDGISGLPDAMICHILSFLPTKVAASTTVLAKRWKPLLAFMPNLDFDESFRFDPRMTCEERRKGSESFMLVVDSVLALQAEANATLNKFYVKCEGVEQNSVLEWIPKVLKRGVLDIDLQIPSSRGFGSNSTFYPLPSEIFVSKTLVRLKIQFQDGANVNVEGDVSLPMLKTLHLDYVKMDTRMLQKLLSGCHTLEELLLMNLIWKESSEPEPCFVSVSVRTLKILKFSRFENFMKAKDFKPIVLLSFDIPNLVYLEYLDTIADKYEQVRFDSLVKASIGLCKTSKQIENDNNNVTKLFMGICNVTILYLTEDTLKVLGCCRETMPVFENLIHLTIRTGVHIGWKSLPHLLKNCPNLQTLVFEGMHHIYRKGRACGDVDEDGTCMCKNLDNMRVKKDIDACLSSSPVKVIKILNFGELCGFCEFCDVEEDVAGQIKQVKQFLETMPDLEKVILYYNTPEDEDVMKVFKKLKKLPRVASAKCEVQIISDNINLSFTFR</sequence>
<feature type="chain" id="PRO_0000274957" description="Putative F-box/LRR-repeat protein At4g00320">
    <location>
        <begin position="1"/>
        <end position="507"/>
    </location>
</feature>
<feature type="domain" description="F-box">
    <location>
        <begin position="12"/>
        <end position="60"/>
    </location>
</feature>
<feature type="repeat" description="LRR 1">
    <location>
        <begin position="135"/>
        <end position="163"/>
    </location>
</feature>
<feature type="repeat" description="LRR 2">
    <location>
        <begin position="187"/>
        <end position="212"/>
    </location>
</feature>
<feature type="repeat" description="LRR 3">
    <location>
        <begin position="214"/>
        <end position="240"/>
    </location>
</feature>
<feature type="repeat" description="LRR 4">
    <location>
        <begin position="317"/>
        <end position="348"/>
    </location>
</feature>
<feature type="repeat" description="LRR 5">
    <location>
        <begin position="349"/>
        <end position="374"/>
    </location>
</feature>
<reference key="1">
    <citation type="journal article" date="1999" name="Nature">
        <title>Sequence and analysis of chromosome 4 of the plant Arabidopsis thaliana.</title>
        <authorList>
            <person name="Mayer K.F.X."/>
            <person name="Schueller C."/>
            <person name="Wambutt R."/>
            <person name="Murphy G."/>
            <person name="Volckaert G."/>
            <person name="Pohl T."/>
            <person name="Duesterhoeft A."/>
            <person name="Stiekema W."/>
            <person name="Entian K.-D."/>
            <person name="Terryn N."/>
            <person name="Harris B."/>
            <person name="Ansorge W."/>
            <person name="Brandt P."/>
            <person name="Grivell L.A."/>
            <person name="Rieger M."/>
            <person name="Weichselgartner M."/>
            <person name="de Simone V."/>
            <person name="Obermaier B."/>
            <person name="Mache R."/>
            <person name="Mueller M."/>
            <person name="Kreis M."/>
            <person name="Delseny M."/>
            <person name="Puigdomenech P."/>
            <person name="Watson M."/>
            <person name="Schmidtheini T."/>
            <person name="Reichert B."/>
            <person name="Portetelle D."/>
            <person name="Perez-Alonso M."/>
            <person name="Boutry M."/>
            <person name="Bancroft I."/>
            <person name="Vos P."/>
            <person name="Hoheisel J."/>
            <person name="Zimmermann W."/>
            <person name="Wedler H."/>
            <person name="Ridley P."/>
            <person name="Langham S.-A."/>
            <person name="McCullagh B."/>
            <person name="Bilham L."/>
            <person name="Robben J."/>
            <person name="van der Schueren J."/>
            <person name="Grymonprez B."/>
            <person name="Chuang Y.-J."/>
            <person name="Vandenbussche F."/>
            <person name="Braeken M."/>
            <person name="Weltjens I."/>
            <person name="Voet M."/>
            <person name="Bastiaens I."/>
            <person name="Aert R."/>
            <person name="Defoor E."/>
            <person name="Weitzenegger T."/>
            <person name="Bothe G."/>
            <person name="Ramsperger U."/>
            <person name="Hilbert H."/>
            <person name="Braun M."/>
            <person name="Holzer E."/>
            <person name="Brandt A."/>
            <person name="Peters S."/>
            <person name="van Staveren M."/>
            <person name="Dirkse W."/>
            <person name="Mooijman P."/>
            <person name="Klein Lankhorst R."/>
            <person name="Rose M."/>
            <person name="Hauf J."/>
            <person name="Koetter P."/>
            <person name="Berneiser S."/>
            <person name="Hempel S."/>
            <person name="Feldpausch M."/>
            <person name="Lamberth S."/>
            <person name="Van den Daele H."/>
            <person name="De Keyser A."/>
            <person name="Buysshaert C."/>
            <person name="Gielen J."/>
            <person name="Villarroel R."/>
            <person name="De Clercq R."/>
            <person name="van Montagu M."/>
            <person name="Rogers J."/>
            <person name="Cronin A."/>
            <person name="Quail M.A."/>
            <person name="Bray-Allen S."/>
            <person name="Clark L."/>
            <person name="Doggett J."/>
            <person name="Hall S."/>
            <person name="Kay M."/>
            <person name="Lennard N."/>
            <person name="McLay K."/>
            <person name="Mayes R."/>
            <person name="Pettett A."/>
            <person name="Rajandream M.A."/>
            <person name="Lyne M."/>
            <person name="Benes V."/>
            <person name="Rechmann S."/>
            <person name="Borkova D."/>
            <person name="Bloecker H."/>
            <person name="Scharfe M."/>
            <person name="Grimm M."/>
            <person name="Loehnert T.-H."/>
            <person name="Dose S."/>
            <person name="de Haan M."/>
            <person name="Maarse A.C."/>
            <person name="Schaefer M."/>
            <person name="Mueller-Auer S."/>
            <person name="Gabel C."/>
            <person name="Fuchs M."/>
            <person name="Fartmann B."/>
            <person name="Granderath K."/>
            <person name="Dauner D."/>
            <person name="Herzl A."/>
            <person name="Neumann S."/>
            <person name="Argiriou A."/>
            <person name="Vitale D."/>
            <person name="Liguori R."/>
            <person name="Piravandi E."/>
            <person name="Massenet O."/>
            <person name="Quigley F."/>
            <person name="Clabauld G."/>
            <person name="Muendlein A."/>
            <person name="Felber R."/>
            <person name="Schnabl S."/>
            <person name="Hiller R."/>
            <person name="Schmidt W."/>
            <person name="Lecharny A."/>
            <person name="Aubourg S."/>
            <person name="Chefdor F."/>
            <person name="Cooke R."/>
            <person name="Berger C."/>
            <person name="Monfort A."/>
            <person name="Casacuberta E."/>
            <person name="Gibbons T."/>
            <person name="Weber N."/>
            <person name="Vandenbol M."/>
            <person name="Bargues M."/>
            <person name="Terol J."/>
            <person name="Torres A."/>
            <person name="Perez-Perez A."/>
            <person name="Purnelle B."/>
            <person name="Bent E."/>
            <person name="Johnson S."/>
            <person name="Tacon D."/>
            <person name="Jesse T."/>
            <person name="Heijnen L."/>
            <person name="Schwarz S."/>
            <person name="Scholler P."/>
            <person name="Heber S."/>
            <person name="Francs P."/>
            <person name="Bielke C."/>
            <person name="Frishman D."/>
            <person name="Haase D."/>
            <person name="Lemcke K."/>
            <person name="Mewes H.-W."/>
            <person name="Stocker S."/>
            <person name="Zaccaria P."/>
            <person name="Bevan M."/>
            <person name="Wilson R.K."/>
            <person name="de la Bastide M."/>
            <person name="Habermann K."/>
            <person name="Parnell L."/>
            <person name="Dedhia N."/>
            <person name="Gnoj L."/>
            <person name="Schutz K."/>
            <person name="Huang E."/>
            <person name="Spiegel L."/>
            <person name="Sekhon M."/>
            <person name="Murray J."/>
            <person name="Sheet P."/>
            <person name="Cordes M."/>
            <person name="Abu-Threideh J."/>
            <person name="Stoneking T."/>
            <person name="Kalicki J."/>
            <person name="Graves T."/>
            <person name="Harmon G."/>
            <person name="Edwards J."/>
            <person name="Latreille P."/>
            <person name="Courtney L."/>
            <person name="Cloud J."/>
            <person name="Abbott A."/>
            <person name="Scott K."/>
            <person name="Johnson D."/>
            <person name="Minx P."/>
            <person name="Bentley D."/>
            <person name="Fulton B."/>
            <person name="Miller N."/>
            <person name="Greco T."/>
            <person name="Kemp K."/>
            <person name="Kramer J."/>
            <person name="Fulton L."/>
            <person name="Mardis E."/>
            <person name="Dante M."/>
            <person name="Pepin K."/>
            <person name="Hillier L.W."/>
            <person name="Nelson J."/>
            <person name="Spieth J."/>
            <person name="Ryan E."/>
            <person name="Andrews S."/>
            <person name="Geisel C."/>
            <person name="Layman D."/>
            <person name="Du H."/>
            <person name="Ali J."/>
            <person name="Berghoff A."/>
            <person name="Jones K."/>
            <person name="Drone K."/>
            <person name="Cotton M."/>
            <person name="Joshu C."/>
            <person name="Antonoiu B."/>
            <person name="Zidanic M."/>
            <person name="Strong C."/>
            <person name="Sun H."/>
            <person name="Lamar B."/>
            <person name="Yordan C."/>
            <person name="Ma P."/>
            <person name="Zhong J."/>
            <person name="Preston R."/>
            <person name="Vil D."/>
            <person name="Shekher M."/>
            <person name="Matero A."/>
            <person name="Shah R."/>
            <person name="Swaby I.K."/>
            <person name="O'Shaughnessy A."/>
            <person name="Rodriguez M."/>
            <person name="Hoffman J."/>
            <person name="Till S."/>
            <person name="Granat S."/>
            <person name="Shohdy N."/>
            <person name="Hasegawa A."/>
            <person name="Hameed A."/>
            <person name="Lodhi M."/>
            <person name="Johnson A."/>
            <person name="Chen E."/>
            <person name="Marra M.A."/>
            <person name="Martienssen R."/>
            <person name="McCombie W.R."/>
        </authorList>
    </citation>
    <scope>NUCLEOTIDE SEQUENCE [LARGE SCALE GENOMIC DNA]</scope>
    <source>
        <strain>cv. Columbia</strain>
    </source>
</reference>
<reference key="2">
    <citation type="journal article" date="2017" name="Plant J.">
        <title>Araport11: a complete reannotation of the Arabidopsis thaliana reference genome.</title>
        <authorList>
            <person name="Cheng C.Y."/>
            <person name="Krishnakumar V."/>
            <person name="Chan A.P."/>
            <person name="Thibaud-Nissen F."/>
            <person name="Schobel S."/>
            <person name="Town C.D."/>
        </authorList>
    </citation>
    <scope>GENOME REANNOTATION</scope>
    <source>
        <strain>cv. Columbia</strain>
    </source>
</reference>
<keyword id="KW-0433">Leucine-rich repeat</keyword>
<keyword id="KW-1185">Reference proteome</keyword>
<keyword id="KW-0677">Repeat</keyword>
<evidence type="ECO:0000305" key="1"/>
<name>FBL71_ARATH</name>
<comment type="sequence caution" evidence="1">
    <conflict type="erroneous gene model prediction">
        <sequence resource="EMBL-CDS" id="AAB62837"/>
    </conflict>
    <text>The predicted gene At4g00320 has been split into 2 genes: At4g00315 and At4g00320.</text>
</comment>
<comment type="sequence caution" evidence="1">
    <conflict type="erroneous gene model prediction">
        <sequence resource="EMBL-CDS" id="AAF02795"/>
    </conflict>
    <text>The predicted gene At4g00320 has been split into 2 genes: At4g00315 and At4g00320.</text>
</comment>
<comment type="sequence caution" evidence="1">
    <conflict type="erroneous gene model prediction">
        <sequence resource="EMBL-CDS" id="CAB80790"/>
    </conflict>
    <text>The predicted gene At4g00320 has been split into 2 genes: At4g00315 and At4g00320.</text>
</comment>
<organism>
    <name type="scientific">Arabidopsis thaliana</name>
    <name type="common">Mouse-ear cress</name>
    <dbReference type="NCBI Taxonomy" id="3702"/>
    <lineage>
        <taxon>Eukaryota</taxon>
        <taxon>Viridiplantae</taxon>
        <taxon>Streptophyta</taxon>
        <taxon>Embryophyta</taxon>
        <taxon>Tracheophyta</taxon>
        <taxon>Spermatophyta</taxon>
        <taxon>Magnoliopsida</taxon>
        <taxon>eudicotyledons</taxon>
        <taxon>Gunneridae</taxon>
        <taxon>Pentapetalae</taxon>
        <taxon>rosids</taxon>
        <taxon>malvids</taxon>
        <taxon>Brassicales</taxon>
        <taxon>Brassicaceae</taxon>
        <taxon>Camelineae</taxon>
        <taxon>Arabidopsis</taxon>
    </lineage>
</organism>
<proteinExistence type="predicted"/>
<gene>
    <name type="ordered locus">At4g00320</name>
    <name type="ORF">A_IG005I10.18</name>
    <name type="ORF">F5I10.18</name>
</gene>